<organism>
    <name type="scientific">Hahella chejuensis (strain KCTC 2396)</name>
    <dbReference type="NCBI Taxonomy" id="349521"/>
    <lineage>
        <taxon>Bacteria</taxon>
        <taxon>Pseudomonadati</taxon>
        <taxon>Pseudomonadota</taxon>
        <taxon>Gammaproteobacteria</taxon>
        <taxon>Oceanospirillales</taxon>
        <taxon>Hahellaceae</taxon>
        <taxon>Hahella</taxon>
    </lineage>
</organism>
<accession>Q2S925</accession>
<protein>
    <recommendedName>
        <fullName evidence="1">Small ribosomal subunit protein uS14</fullName>
    </recommendedName>
    <alternativeName>
        <fullName evidence="2">30S ribosomal protein S14</fullName>
    </alternativeName>
</protein>
<gene>
    <name evidence="1" type="primary">rpsN</name>
    <name type="ordered locus">HCH_06204</name>
</gene>
<proteinExistence type="inferred from homology"/>
<dbReference type="EMBL" id="CP000155">
    <property type="protein sequence ID" value="ABC32849.1"/>
    <property type="molecule type" value="Genomic_DNA"/>
</dbReference>
<dbReference type="RefSeq" id="WP_011399907.1">
    <property type="nucleotide sequence ID" value="NC_007645.1"/>
</dbReference>
<dbReference type="SMR" id="Q2S925"/>
<dbReference type="STRING" id="349521.HCH_06204"/>
<dbReference type="KEGG" id="hch:HCH_06204"/>
<dbReference type="eggNOG" id="COG0199">
    <property type="taxonomic scope" value="Bacteria"/>
</dbReference>
<dbReference type="HOGENOM" id="CLU_139869_0_1_6"/>
<dbReference type="OrthoDB" id="9810484at2"/>
<dbReference type="Proteomes" id="UP000000238">
    <property type="component" value="Chromosome"/>
</dbReference>
<dbReference type="GO" id="GO:0005737">
    <property type="term" value="C:cytoplasm"/>
    <property type="evidence" value="ECO:0007669"/>
    <property type="project" value="UniProtKB-ARBA"/>
</dbReference>
<dbReference type="GO" id="GO:0015935">
    <property type="term" value="C:small ribosomal subunit"/>
    <property type="evidence" value="ECO:0007669"/>
    <property type="project" value="TreeGrafter"/>
</dbReference>
<dbReference type="GO" id="GO:0019843">
    <property type="term" value="F:rRNA binding"/>
    <property type="evidence" value="ECO:0007669"/>
    <property type="project" value="UniProtKB-UniRule"/>
</dbReference>
<dbReference type="GO" id="GO:0003735">
    <property type="term" value="F:structural constituent of ribosome"/>
    <property type="evidence" value="ECO:0007669"/>
    <property type="project" value="InterPro"/>
</dbReference>
<dbReference type="GO" id="GO:0006412">
    <property type="term" value="P:translation"/>
    <property type="evidence" value="ECO:0007669"/>
    <property type="project" value="UniProtKB-UniRule"/>
</dbReference>
<dbReference type="FunFam" id="1.10.287.1480:FF:000001">
    <property type="entry name" value="30S ribosomal protein S14"/>
    <property type="match status" value="1"/>
</dbReference>
<dbReference type="Gene3D" id="1.10.287.1480">
    <property type="match status" value="1"/>
</dbReference>
<dbReference type="HAMAP" id="MF_00537">
    <property type="entry name" value="Ribosomal_uS14_1"/>
    <property type="match status" value="1"/>
</dbReference>
<dbReference type="InterPro" id="IPR001209">
    <property type="entry name" value="Ribosomal_uS14"/>
</dbReference>
<dbReference type="InterPro" id="IPR023036">
    <property type="entry name" value="Ribosomal_uS14_bac/plastid"/>
</dbReference>
<dbReference type="InterPro" id="IPR018271">
    <property type="entry name" value="Ribosomal_uS14_CS"/>
</dbReference>
<dbReference type="NCBIfam" id="NF006477">
    <property type="entry name" value="PRK08881.1"/>
    <property type="match status" value="1"/>
</dbReference>
<dbReference type="PANTHER" id="PTHR19836">
    <property type="entry name" value="30S RIBOSOMAL PROTEIN S14"/>
    <property type="match status" value="1"/>
</dbReference>
<dbReference type="PANTHER" id="PTHR19836:SF19">
    <property type="entry name" value="SMALL RIBOSOMAL SUBUNIT PROTEIN US14M"/>
    <property type="match status" value="1"/>
</dbReference>
<dbReference type="Pfam" id="PF00253">
    <property type="entry name" value="Ribosomal_S14"/>
    <property type="match status" value="1"/>
</dbReference>
<dbReference type="SUPFAM" id="SSF57716">
    <property type="entry name" value="Glucocorticoid receptor-like (DNA-binding domain)"/>
    <property type="match status" value="1"/>
</dbReference>
<dbReference type="PROSITE" id="PS00527">
    <property type="entry name" value="RIBOSOMAL_S14"/>
    <property type="match status" value="1"/>
</dbReference>
<reference key="1">
    <citation type="journal article" date="2005" name="Nucleic Acids Res.">
        <title>Genomic blueprint of Hahella chejuensis, a marine microbe producing an algicidal agent.</title>
        <authorList>
            <person name="Jeong H."/>
            <person name="Yim J.H."/>
            <person name="Lee C."/>
            <person name="Choi S.-H."/>
            <person name="Park Y.K."/>
            <person name="Yoon S.H."/>
            <person name="Hur C.-G."/>
            <person name="Kang H.-Y."/>
            <person name="Kim D."/>
            <person name="Lee H.H."/>
            <person name="Park K.H."/>
            <person name="Park S.-H."/>
            <person name="Park H.-S."/>
            <person name="Lee H.K."/>
            <person name="Oh T.K."/>
            <person name="Kim J.F."/>
        </authorList>
    </citation>
    <scope>NUCLEOTIDE SEQUENCE [LARGE SCALE GENOMIC DNA]</scope>
    <source>
        <strain>KCTC 2396</strain>
    </source>
</reference>
<feature type="chain" id="PRO_1000128419" description="Small ribosomal subunit protein uS14">
    <location>
        <begin position="1"/>
        <end position="101"/>
    </location>
</feature>
<keyword id="KW-1185">Reference proteome</keyword>
<keyword id="KW-0687">Ribonucleoprotein</keyword>
<keyword id="KW-0689">Ribosomal protein</keyword>
<keyword id="KW-0694">RNA-binding</keyword>
<keyword id="KW-0699">rRNA-binding</keyword>
<evidence type="ECO:0000255" key="1">
    <source>
        <dbReference type="HAMAP-Rule" id="MF_00537"/>
    </source>
</evidence>
<evidence type="ECO:0000305" key="2"/>
<name>RS14_HAHCH</name>
<sequence>MAKVGMRERELKREKTVAKYAEKRAALKAIIANPNVSDEERWEAQMKLQKLPRDASPSRLRNRCQVTGRPHAVLRKFRLSRIKLREAAMRGDVPGLKKASW</sequence>
<comment type="function">
    <text evidence="1">Binds 16S rRNA, required for the assembly of 30S particles and may also be responsible for determining the conformation of the 16S rRNA at the A site.</text>
</comment>
<comment type="subunit">
    <text evidence="1">Part of the 30S ribosomal subunit. Contacts proteins S3 and S10.</text>
</comment>
<comment type="similarity">
    <text evidence="1">Belongs to the universal ribosomal protein uS14 family.</text>
</comment>